<comment type="similarity">
    <text evidence="1">Belongs to the Tlp family.</text>
</comment>
<evidence type="ECO:0000255" key="1">
    <source>
        <dbReference type="HAMAP-Rule" id="MF_01506"/>
    </source>
</evidence>
<evidence type="ECO:0000256" key="2">
    <source>
        <dbReference type="SAM" id="MobiDB-lite"/>
    </source>
</evidence>
<name>TLP_DESRM</name>
<feature type="chain" id="PRO_1000073530" description="Protein Tlp homolog">
    <location>
        <begin position="1"/>
        <end position="71"/>
    </location>
</feature>
<feature type="region of interest" description="Disordered" evidence="2">
    <location>
        <begin position="30"/>
        <end position="56"/>
    </location>
</feature>
<feature type="compositionally biased region" description="Basic and acidic residues" evidence="2">
    <location>
        <begin position="39"/>
        <end position="56"/>
    </location>
</feature>
<organism>
    <name type="scientific">Desulforamulus reducens (strain ATCC BAA-1160 / DSM 100696 / MI-1)</name>
    <name type="common">Desulfotomaculum reducens</name>
    <dbReference type="NCBI Taxonomy" id="349161"/>
    <lineage>
        <taxon>Bacteria</taxon>
        <taxon>Bacillati</taxon>
        <taxon>Bacillota</taxon>
        <taxon>Clostridia</taxon>
        <taxon>Eubacteriales</taxon>
        <taxon>Peptococcaceae</taxon>
        <taxon>Desulforamulus</taxon>
    </lineage>
</organism>
<accession>A4J5G4</accession>
<keyword id="KW-1185">Reference proteome</keyword>
<reference key="1">
    <citation type="submission" date="2007-03" db="EMBL/GenBank/DDBJ databases">
        <title>Complete sequence of Desulfotomaculum reducens MI-1.</title>
        <authorList>
            <consortium name="US DOE Joint Genome Institute"/>
            <person name="Copeland A."/>
            <person name="Lucas S."/>
            <person name="Lapidus A."/>
            <person name="Barry K."/>
            <person name="Detter J.C."/>
            <person name="Glavina del Rio T."/>
            <person name="Hammon N."/>
            <person name="Israni S."/>
            <person name="Dalin E."/>
            <person name="Tice H."/>
            <person name="Pitluck S."/>
            <person name="Sims D."/>
            <person name="Brettin T."/>
            <person name="Bruce D."/>
            <person name="Han C."/>
            <person name="Tapia R."/>
            <person name="Schmutz J."/>
            <person name="Larimer F."/>
            <person name="Land M."/>
            <person name="Hauser L."/>
            <person name="Kyrpides N."/>
            <person name="Kim E."/>
            <person name="Tebo B.M."/>
            <person name="Richardson P."/>
        </authorList>
    </citation>
    <scope>NUCLEOTIDE SEQUENCE [LARGE SCALE GENOMIC DNA]</scope>
    <source>
        <strain>ATCC BAA-1160 / DSM 100696 / MI-1</strain>
    </source>
</reference>
<protein>
    <recommendedName>
        <fullName evidence="1">Protein Tlp homolog</fullName>
    </recommendedName>
</protein>
<sequence>MAKPDNRNDNVEKLQEMVQDTIENLEEAHETLQNNSLSRDQRQAIMEKNKRREESIRSFRNEIKDEYQDLH</sequence>
<gene>
    <name evidence="1" type="primary">tlp</name>
    <name type="ordered locus">Dred_1792</name>
</gene>
<proteinExistence type="inferred from homology"/>
<dbReference type="EMBL" id="CP000612">
    <property type="protein sequence ID" value="ABO50317.1"/>
    <property type="molecule type" value="Genomic_DNA"/>
</dbReference>
<dbReference type="RefSeq" id="WP_011878130.1">
    <property type="nucleotide sequence ID" value="NC_009253.1"/>
</dbReference>
<dbReference type="SMR" id="A4J5G4"/>
<dbReference type="STRING" id="349161.Dred_1792"/>
<dbReference type="KEGG" id="drm:Dred_1792"/>
<dbReference type="eggNOG" id="ENOG50330RR">
    <property type="taxonomic scope" value="Bacteria"/>
</dbReference>
<dbReference type="HOGENOM" id="CLU_178266_0_0_9"/>
<dbReference type="OrthoDB" id="1799076at2"/>
<dbReference type="Proteomes" id="UP000001556">
    <property type="component" value="Chromosome"/>
</dbReference>
<dbReference type="HAMAP" id="MF_01506">
    <property type="entry name" value="Tlp"/>
    <property type="match status" value="1"/>
</dbReference>
<dbReference type="InterPro" id="IPR017524">
    <property type="entry name" value="SASP_thioredoxin-like"/>
</dbReference>
<dbReference type="NCBIfam" id="TIGR03090">
    <property type="entry name" value="SASP_tlp"/>
    <property type="match status" value="1"/>
</dbReference>
<dbReference type="Pfam" id="PF19824">
    <property type="entry name" value="Tlp"/>
    <property type="match status" value="1"/>
</dbReference>